<feature type="chain" id="PRO_0000272114" description="Lipoprotein-releasing system ATP-binding protein LolD">
    <location>
        <begin position="1"/>
        <end position="225"/>
    </location>
</feature>
<feature type="domain" description="ABC transporter" evidence="1">
    <location>
        <begin position="6"/>
        <end position="225"/>
    </location>
</feature>
<feature type="binding site" evidence="1">
    <location>
        <begin position="42"/>
        <end position="49"/>
    </location>
    <ligand>
        <name>ATP</name>
        <dbReference type="ChEBI" id="CHEBI:30616"/>
    </ligand>
</feature>
<keyword id="KW-0067">ATP-binding</keyword>
<keyword id="KW-0997">Cell inner membrane</keyword>
<keyword id="KW-1003">Cell membrane</keyword>
<keyword id="KW-0472">Membrane</keyword>
<keyword id="KW-0547">Nucleotide-binding</keyword>
<keyword id="KW-1185">Reference proteome</keyword>
<keyword id="KW-1278">Translocase</keyword>
<keyword id="KW-0813">Transport</keyword>
<organism>
    <name type="scientific">Nitrosospira multiformis (strain ATCC 25196 / NCIMB 11849 / C 71)</name>
    <dbReference type="NCBI Taxonomy" id="323848"/>
    <lineage>
        <taxon>Bacteria</taxon>
        <taxon>Pseudomonadati</taxon>
        <taxon>Pseudomonadota</taxon>
        <taxon>Betaproteobacteria</taxon>
        <taxon>Nitrosomonadales</taxon>
        <taxon>Nitrosomonadaceae</taxon>
        <taxon>Nitrosospira</taxon>
    </lineage>
</organism>
<comment type="function">
    <text evidence="1">Part of the ABC transporter complex LolCDE involved in the translocation of mature outer membrane-directed lipoproteins, from the inner membrane to the periplasmic chaperone, LolA. Responsible for the formation of the LolA-lipoprotein complex in an ATP-dependent manner.</text>
</comment>
<comment type="subunit">
    <text evidence="1">The complex is composed of two ATP-binding proteins (LolD) and two transmembrane proteins (LolC and LolE).</text>
</comment>
<comment type="subcellular location">
    <subcellularLocation>
        <location evidence="1">Cell inner membrane</location>
        <topology evidence="1">Peripheral membrane protein</topology>
    </subcellularLocation>
</comment>
<comment type="similarity">
    <text evidence="1">Belongs to the ABC transporter superfamily. Lipoprotein translocase (TC 3.A.1.125) family.</text>
</comment>
<proteinExistence type="inferred from homology"/>
<gene>
    <name evidence="1" type="primary">lolD</name>
    <name type="ordered locus">Nmul_A2508</name>
</gene>
<sequence>MSDNIISCRNLRKSYYQGQIEVPVLMGIDLKVGKGDTVAIVGASGSGKSTLLHLLGGLDVPTGGEIRILSHEIAGMGEAERCELRNRSLGFVYQFHHLLPEFTALENVAMPLLIRRMAKAKAYESAREVLQQVGLGHRLTHTPGELSGGERQRAAVARALVTRPACVLADEPTGNLDRRTAGEVFDLMLELNHDAGASLVIVTHDPDLARKAGRTLHLEDGLLTV</sequence>
<reference key="1">
    <citation type="submission" date="2005-08" db="EMBL/GenBank/DDBJ databases">
        <title>Complete sequence of chromosome 1 of Nitrosospira multiformis ATCC 25196.</title>
        <authorList>
            <person name="Copeland A."/>
            <person name="Lucas S."/>
            <person name="Lapidus A."/>
            <person name="Barry K."/>
            <person name="Detter J.C."/>
            <person name="Glavina T."/>
            <person name="Hammon N."/>
            <person name="Israni S."/>
            <person name="Pitluck S."/>
            <person name="Chain P."/>
            <person name="Malfatti S."/>
            <person name="Shin M."/>
            <person name="Vergez L."/>
            <person name="Schmutz J."/>
            <person name="Larimer F."/>
            <person name="Land M."/>
            <person name="Hauser L."/>
            <person name="Kyrpides N."/>
            <person name="Lykidis A."/>
            <person name="Richardson P."/>
        </authorList>
    </citation>
    <scope>NUCLEOTIDE SEQUENCE [LARGE SCALE GENOMIC DNA]</scope>
    <source>
        <strain>ATCC 25196 / NCIMB 11849 / C 71</strain>
    </source>
</reference>
<name>LOLD_NITMU</name>
<dbReference type="EC" id="7.6.2.-" evidence="1"/>
<dbReference type="EMBL" id="CP000103">
    <property type="protein sequence ID" value="ABB75797.1"/>
    <property type="molecule type" value="Genomic_DNA"/>
</dbReference>
<dbReference type="RefSeq" id="WP_011381796.1">
    <property type="nucleotide sequence ID" value="NC_007614.1"/>
</dbReference>
<dbReference type="SMR" id="Q2Y624"/>
<dbReference type="STRING" id="323848.Nmul_A2508"/>
<dbReference type="KEGG" id="nmu:Nmul_A2508"/>
<dbReference type="eggNOG" id="COG1136">
    <property type="taxonomic scope" value="Bacteria"/>
</dbReference>
<dbReference type="HOGENOM" id="CLU_000604_1_22_4"/>
<dbReference type="OrthoDB" id="8524638at2"/>
<dbReference type="Proteomes" id="UP000002718">
    <property type="component" value="Chromosome"/>
</dbReference>
<dbReference type="GO" id="GO:0005886">
    <property type="term" value="C:plasma membrane"/>
    <property type="evidence" value="ECO:0007669"/>
    <property type="project" value="UniProtKB-SubCell"/>
</dbReference>
<dbReference type="GO" id="GO:0005524">
    <property type="term" value="F:ATP binding"/>
    <property type="evidence" value="ECO:0007669"/>
    <property type="project" value="UniProtKB-KW"/>
</dbReference>
<dbReference type="GO" id="GO:0016887">
    <property type="term" value="F:ATP hydrolysis activity"/>
    <property type="evidence" value="ECO:0007669"/>
    <property type="project" value="InterPro"/>
</dbReference>
<dbReference type="GO" id="GO:0022857">
    <property type="term" value="F:transmembrane transporter activity"/>
    <property type="evidence" value="ECO:0007669"/>
    <property type="project" value="TreeGrafter"/>
</dbReference>
<dbReference type="GO" id="GO:0044874">
    <property type="term" value="P:lipoprotein localization to outer membrane"/>
    <property type="evidence" value="ECO:0007669"/>
    <property type="project" value="TreeGrafter"/>
</dbReference>
<dbReference type="GO" id="GO:0089705">
    <property type="term" value="P:protein localization to outer membrane"/>
    <property type="evidence" value="ECO:0007669"/>
    <property type="project" value="TreeGrafter"/>
</dbReference>
<dbReference type="CDD" id="cd03255">
    <property type="entry name" value="ABC_MJ0796_LolCDE_FtsE"/>
    <property type="match status" value="1"/>
</dbReference>
<dbReference type="FunFam" id="3.40.50.300:FF:000230">
    <property type="entry name" value="Lipoprotein-releasing system ATP-binding protein LolD"/>
    <property type="match status" value="1"/>
</dbReference>
<dbReference type="Gene3D" id="3.40.50.300">
    <property type="entry name" value="P-loop containing nucleotide triphosphate hydrolases"/>
    <property type="match status" value="1"/>
</dbReference>
<dbReference type="InterPro" id="IPR003593">
    <property type="entry name" value="AAA+_ATPase"/>
</dbReference>
<dbReference type="InterPro" id="IPR003439">
    <property type="entry name" value="ABC_transporter-like_ATP-bd"/>
</dbReference>
<dbReference type="InterPro" id="IPR017871">
    <property type="entry name" value="ABC_transporter-like_CS"/>
</dbReference>
<dbReference type="InterPro" id="IPR015854">
    <property type="entry name" value="ABC_transpr_LolD-like"/>
</dbReference>
<dbReference type="InterPro" id="IPR011924">
    <property type="entry name" value="LolD_lipo_ATP-bd"/>
</dbReference>
<dbReference type="InterPro" id="IPR017911">
    <property type="entry name" value="MacB-like_ATP-bd"/>
</dbReference>
<dbReference type="InterPro" id="IPR027417">
    <property type="entry name" value="P-loop_NTPase"/>
</dbReference>
<dbReference type="NCBIfam" id="TIGR02211">
    <property type="entry name" value="LolD_lipo_ex"/>
    <property type="match status" value="1"/>
</dbReference>
<dbReference type="PANTHER" id="PTHR24220">
    <property type="entry name" value="IMPORT ATP-BINDING PROTEIN"/>
    <property type="match status" value="1"/>
</dbReference>
<dbReference type="PANTHER" id="PTHR24220:SF689">
    <property type="entry name" value="LIPOPROTEIN-RELEASING SYSTEM ATP-BINDING PROTEIN LOLD"/>
    <property type="match status" value="1"/>
</dbReference>
<dbReference type="Pfam" id="PF00005">
    <property type="entry name" value="ABC_tran"/>
    <property type="match status" value="1"/>
</dbReference>
<dbReference type="SMART" id="SM00382">
    <property type="entry name" value="AAA"/>
    <property type="match status" value="1"/>
</dbReference>
<dbReference type="SUPFAM" id="SSF52540">
    <property type="entry name" value="P-loop containing nucleoside triphosphate hydrolases"/>
    <property type="match status" value="1"/>
</dbReference>
<dbReference type="PROSITE" id="PS00211">
    <property type="entry name" value="ABC_TRANSPORTER_1"/>
    <property type="match status" value="1"/>
</dbReference>
<dbReference type="PROSITE" id="PS50893">
    <property type="entry name" value="ABC_TRANSPORTER_2"/>
    <property type="match status" value="1"/>
</dbReference>
<dbReference type="PROSITE" id="PS51244">
    <property type="entry name" value="LOLD"/>
    <property type="match status" value="1"/>
</dbReference>
<protein>
    <recommendedName>
        <fullName evidence="1">Lipoprotein-releasing system ATP-binding protein LolD</fullName>
        <ecNumber evidence="1">7.6.2.-</ecNumber>
    </recommendedName>
</protein>
<evidence type="ECO:0000255" key="1">
    <source>
        <dbReference type="HAMAP-Rule" id="MF_01708"/>
    </source>
</evidence>
<accession>Q2Y624</accession>